<dbReference type="EC" id="3.7.1.21" evidence="2"/>
<dbReference type="EMBL" id="CP000148">
    <property type="protein sequence ID" value="ABB32317.1"/>
    <property type="molecule type" value="Genomic_DNA"/>
</dbReference>
<dbReference type="SMR" id="Q39TV7"/>
<dbReference type="STRING" id="269799.Gmet_2088"/>
<dbReference type="KEGG" id="gme:Gmet_2088"/>
<dbReference type="eggNOG" id="COG1024">
    <property type="taxonomic scope" value="Bacteria"/>
</dbReference>
<dbReference type="HOGENOM" id="CLU_729117_0_0_7"/>
<dbReference type="UniPathway" id="UPA00739"/>
<dbReference type="Proteomes" id="UP000007073">
    <property type="component" value="Chromosome"/>
</dbReference>
<dbReference type="GO" id="GO:0018807">
    <property type="term" value="F:6-hydroxycyclohex-1-ene-1-carboxyl-CoA hydratase activity"/>
    <property type="evidence" value="ECO:0007669"/>
    <property type="project" value="UniProtKB-EC"/>
</dbReference>
<dbReference type="GO" id="GO:0016823">
    <property type="term" value="F:hydrolase activity, acting on acid carbon-carbon bonds, in ketonic substances"/>
    <property type="evidence" value="ECO:0000314"/>
    <property type="project" value="UniProtKB"/>
</dbReference>
<dbReference type="GO" id="GO:1901788">
    <property type="term" value="P:benzoyl-CoA catabolic process"/>
    <property type="evidence" value="ECO:0000314"/>
    <property type="project" value="UniProtKB"/>
</dbReference>
<dbReference type="GO" id="GO:0006635">
    <property type="term" value="P:fatty acid beta-oxidation"/>
    <property type="evidence" value="ECO:0007669"/>
    <property type="project" value="TreeGrafter"/>
</dbReference>
<dbReference type="CDD" id="cd06558">
    <property type="entry name" value="crotonase-like"/>
    <property type="match status" value="1"/>
</dbReference>
<dbReference type="FunFam" id="3.90.226.10:FF:000112">
    <property type="entry name" value="6-oxocyclohex-1-ene-1-carbonyl-CoA hydrolase"/>
    <property type="match status" value="1"/>
</dbReference>
<dbReference type="Gene3D" id="3.90.226.10">
    <property type="entry name" value="2-enoyl-CoA Hydratase, Chain A, domain 1"/>
    <property type="match status" value="1"/>
</dbReference>
<dbReference type="InterPro" id="IPR029045">
    <property type="entry name" value="ClpP/crotonase-like_dom_sf"/>
</dbReference>
<dbReference type="InterPro" id="IPR017613">
    <property type="entry name" value="Dearomat_hydrolase"/>
</dbReference>
<dbReference type="InterPro" id="IPR018376">
    <property type="entry name" value="Enoyl-CoA_hyd/isom_CS"/>
</dbReference>
<dbReference type="InterPro" id="IPR001753">
    <property type="entry name" value="Enoyl-CoA_hydra/iso"/>
</dbReference>
<dbReference type="NCBIfam" id="TIGR03200">
    <property type="entry name" value="dearomat_oah"/>
    <property type="match status" value="1"/>
</dbReference>
<dbReference type="PANTHER" id="PTHR11941:SF54">
    <property type="entry name" value="ENOYL-COA HYDRATASE, MITOCHONDRIAL"/>
    <property type="match status" value="1"/>
</dbReference>
<dbReference type="PANTHER" id="PTHR11941">
    <property type="entry name" value="ENOYL-COA HYDRATASE-RELATED"/>
    <property type="match status" value="1"/>
</dbReference>
<dbReference type="Pfam" id="PF00378">
    <property type="entry name" value="ECH_1"/>
    <property type="match status" value="1"/>
</dbReference>
<dbReference type="SUPFAM" id="SSF52096">
    <property type="entry name" value="ClpP/crotonase"/>
    <property type="match status" value="1"/>
</dbReference>
<dbReference type="PROSITE" id="PS00166">
    <property type="entry name" value="ENOYL_COA_HYDRATASE"/>
    <property type="match status" value="1"/>
</dbReference>
<comment type="function">
    <text evidence="2">Involved in the central benzoyl-CoA catabolism. Catalyzes the addition of one molecule of water to the double bond and the hydrolytic cleavage of C-C bond in the alicyclic ring, 6-oxocyclohex-1-ene-1-carbonyl-CoA (6-OCH-CoA) to yield 3-hydroxypimelyl-CoA.</text>
</comment>
<comment type="catalytic activity">
    <reaction evidence="2">
        <text>6-oxocyclohex-1-ene-1-carbonyl-CoA + 2 H2O = 3-hydroxy-6-carboxyhexanoyl-CoA + H(+)</text>
        <dbReference type="Rhea" id="RHEA:39651"/>
        <dbReference type="ChEBI" id="CHEBI:15377"/>
        <dbReference type="ChEBI" id="CHEBI:15378"/>
        <dbReference type="ChEBI" id="CHEBI:57343"/>
        <dbReference type="ChEBI" id="CHEBI:76526"/>
        <dbReference type="EC" id="3.7.1.21"/>
    </reaction>
</comment>
<comment type="biophysicochemical properties">
    <kinetics>
        <KM evidence="2">70 uM for 6-OCH-CoA</KM>
    </kinetics>
</comment>
<comment type="pathway">
    <text evidence="5">Aromatic compound metabolism; benzoyl-CoA degradation.</text>
</comment>
<comment type="subunit">
    <text evidence="2">Homohexamer.</text>
</comment>
<comment type="induction">
    <text evidence="1">By benzoate.</text>
</comment>
<comment type="similarity">
    <text evidence="5">Belongs to the enoyl-CoA hydratase/isomerase family.</text>
</comment>
<sequence length="381" mass="41952">MARTDEIIARTAPGHLNDHNLIDREVESLCDGMVKYEKRPAKRHDGSVAEGIYNAWIILDNPKQYNSYTTDMVKAIILAFRRASVDRSVNAVVFTGVGDKAFCTGGNTKEYAEYYAGNPQEYRQYMRLFNDMVSAILGCDKAVISRVNGMRIGGGQEIGMACDFSIAQDLANFGQAGPKHGSAAIGGATDFLPLMVGCEQAMVSGTLCEPFSAHKAARLGIICDVVPALKVGGKFVANPTVVTDRYLDEYGRVVHGEFKAGAAFKEGQGQIKEGEIDLSLLDEKVESLCTKLLETFPECMTKSLEELRKPKLHAWNLNKENSRAWLALNMMNEARTGFRAFNEGTKETGREIDFVKLRQGLAKGTPWTEELIESLMPTAQK</sequence>
<accession>Q39TV7</accession>
<gene>
    <name evidence="3" type="primary">bamA</name>
    <name type="ordered locus">Gmet_2088</name>
</gene>
<keyword id="KW-0378">Hydrolase</keyword>
<keyword id="KW-1185">Reference proteome</keyword>
<name>BAMA_GEOMG</name>
<evidence type="ECO:0000269" key="1">
    <source>
    </source>
</evidence>
<evidence type="ECO:0000269" key="2">
    <source>
    </source>
</evidence>
<evidence type="ECO:0000303" key="3">
    <source>
    </source>
</evidence>
<evidence type="ECO:0000303" key="4">
    <source>
    </source>
</evidence>
<evidence type="ECO:0000305" key="5"/>
<reference key="1">
    <citation type="journal article" date="2009" name="BMC Microbiol.">
        <title>The genome sequence of Geobacter metallireducens: features of metabolism, physiology and regulation common and dissimilar to Geobacter sulfurreducens.</title>
        <authorList>
            <person name="Aklujkar M."/>
            <person name="Krushkal J."/>
            <person name="DiBartolo G."/>
            <person name="Lapidus A."/>
            <person name="Land M.L."/>
            <person name="Lovley D.R."/>
        </authorList>
    </citation>
    <scope>NUCLEOTIDE SEQUENCE [LARGE SCALE GENOMIC DNA]</scope>
    <source>
        <strain>ATCC 53774 / DSM 7210 / GS-15</strain>
    </source>
</reference>
<reference key="2">
    <citation type="journal article" date="2005" name="Mol. Microbiol.">
        <title>Gene clusters involved in anaerobic benzoate degradation of Geobacter metallireducens.</title>
        <authorList>
            <person name="Wischgoll S."/>
            <person name="Heintz D."/>
            <person name="Peters F."/>
            <person name="Erxleben A."/>
            <person name="Sarnighausen E."/>
            <person name="Reski R."/>
            <person name="Van Dorsselaer A."/>
            <person name="Boll M."/>
        </authorList>
    </citation>
    <scope>INDUCTION</scope>
    <source>
        <strain>ATCC 53774 / DSM 7210 / GS-15</strain>
    </source>
</reference>
<reference key="3">
    <citation type="journal article" date="2008" name="Environ. Microbiol.">
        <title>6-Oxocyclohex-1-ene-1-carbonyl-coenzyme A hydrolases from obligately anaerobic bacteria: characterization and identification of its gene as a functional marker for aromatic compounds degrading anaerobes.</title>
        <authorList>
            <person name="Kuntze K."/>
            <person name="Shinoda Y."/>
            <person name="Moutakki H."/>
            <person name="McInerney M.J."/>
            <person name="Vogt C."/>
            <person name="Richnow H.H."/>
            <person name="Boll M."/>
        </authorList>
    </citation>
    <scope>FUNCTION</scope>
    <scope>CATALYTIC ACTIVITY</scope>
    <scope>BIOPHYSICOCHEMICAL PROPERTIES</scope>
    <scope>SUBUNIT</scope>
    <source>
        <strain>ATCC 53774 / DSM 7210 / GS-15</strain>
    </source>
</reference>
<proteinExistence type="evidence at protein level"/>
<organism>
    <name type="scientific">Geobacter metallireducens (strain ATCC 53774 / DSM 7210 / GS-15)</name>
    <dbReference type="NCBI Taxonomy" id="269799"/>
    <lineage>
        <taxon>Bacteria</taxon>
        <taxon>Pseudomonadati</taxon>
        <taxon>Thermodesulfobacteriota</taxon>
        <taxon>Desulfuromonadia</taxon>
        <taxon>Geobacterales</taxon>
        <taxon>Geobacteraceae</taxon>
        <taxon>Geobacter</taxon>
    </lineage>
</organism>
<feature type="chain" id="PRO_0000430863" description="6-oxocyclohex-1-ene-1-carbonyl-CoA hydrolase">
    <location>
        <begin position="1"/>
        <end position="381"/>
    </location>
</feature>
<protein>
    <recommendedName>
        <fullName evidence="4">6-oxocyclohex-1-ene-1-carbonyl-CoA hydrolase</fullName>
        <shortName evidence="4">6-OCH-CoA hydrolase</shortName>
        <ecNumber evidence="2">3.7.1.21</ecNumber>
    </recommendedName>
    <alternativeName>
        <fullName evidence="5">6-oxocyclohex-1-ene-1-carbonyl-CoA hydratase</fullName>
    </alternativeName>
</protein>